<gene>
    <name evidence="5" type="primary">Tsc22d4</name>
    <name evidence="1" type="synonym">Thg1-pit</name>
</gene>
<feature type="chain" id="PRO_0000417669" description="TSC22 domain family protein 4">
    <location>
        <begin position="1"/>
        <end position="387"/>
    </location>
</feature>
<feature type="region of interest" description="Disordered" evidence="3">
    <location>
        <begin position="1"/>
        <end position="85"/>
    </location>
</feature>
<feature type="region of interest" description="Disordered" evidence="3">
    <location>
        <begin position="135"/>
        <end position="232"/>
    </location>
</feature>
<feature type="region of interest" description="Leucine-zipper">
    <location>
        <begin position="336"/>
        <end position="357"/>
    </location>
</feature>
<feature type="region of interest" description="Disordered" evidence="3">
    <location>
        <begin position="368"/>
        <end position="387"/>
    </location>
</feature>
<feature type="compositionally biased region" description="Pro residues" evidence="3">
    <location>
        <begin position="28"/>
        <end position="51"/>
    </location>
</feature>
<feature type="modified residue" description="Phosphothreonine" evidence="2">
    <location>
        <position position="57"/>
    </location>
</feature>
<feature type="modified residue" description="Phosphoserine" evidence="2">
    <location>
        <position position="62"/>
    </location>
</feature>
<feature type="modified residue" description="Phosphoserine" evidence="6">
    <location>
        <position position="165"/>
    </location>
</feature>
<feature type="modified residue" description="Phosphothreonine" evidence="1">
    <location>
        <position position="183"/>
    </location>
</feature>
<feature type="modified residue" description="Phosphoserine" evidence="1">
    <location>
        <position position="187"/>
    </location>
</feature>
<feature type="modified residue" description="Phosphoserine" evidence="1">
    <location>
        <position position="189"/>
    </location>
</feature>
<feature type="modified residue" description="Phosphothreonine" evidence="6">
    <location>
        <position position="223"/>
    </location>
</feature>
<feature type="modified residue" description="Phosphoserine" evidence="1">
    <location>
        <position position="254"/>
    </location>
</feature>
<feature type="modified residue" description="Phosphoserine" evidence="1">
    <location>
        <position position="258"/>
    </location>
</feature>
<feature type="modified residue" description="Phosphoserine" evidence="6">
    <location>
        <position position="271"/>
    </location>
</feature>
<feature type="modified residue" description="Phosphoserine" evidence="2">
    <location>
        <position position="362"/>
    </location>
</feature>
<proteinExistence type="evidence at protein level"/>
<dbReference type="EMBL" id="CH473973">
    <property type="protein sequence ID" value="EDM13242.1"/>
    <property type="molecule type" value="Genomic_DNA"/>
</dbReference>
<dbReference type="EMBL" id="BC105911">
    <property type="protein sequence ID" value="AAI05912.1"/>
    <property type="molecule type" value="mRNA"/>
</dbReference>
<dbReference type="RefSeq" id="NP_001037749.1">
    <property type="nucleotide sequence ID" value="NM_001044284.3"/>
</dbReference>
<dbReference type="RefSeq" id="XP_006249139.1">
    <property type="nucleotide sequence ID" value="XM_006249077.3"/>
</dbReference>
<dbReference type="RefSeq" id="XP_017459950.1">
    <property type="nucleotide sequence ID" value="XM_017604461.1"/>
</dbReference>
<dbReference type="SMR" id="Q3B8N7"/>
<dbReference type="FunCoup" id="Q3B8N7">
    <property type="interactions" value="124"/>
</dbReference>
<dbReference type="STRING" id="10116.ENSRNOP00000033658"/>
<dbReference type="iPTMnet" id="Q3B8N7"/>
<dbReference type="PhosphoSitePlus" id="Q3B8N7"/>
<dbReference type="jPOST" id="Q3B8N7"/>
<dbReference type="PaxDb" id="10116-ENSRNOP00000033658"/>
<dbReference type="Ensembl" id="ENSRNOT00000039280.6">
    <property type="protein sequence ID" value="ENSRNOP00000033658.4"/>
    <property type="gene ID" value="ENSRNOG00000050805.3"/>
</dbReference>
<dbReference type="GeneID" id="684980"/>
<dbReference type="KEGG" id="rno:684980"/>
<dbReference type="AGR" id="RGD:1584380"/>
<dbReference type="CTD" id="81628"/>
<dbReference type="RGD" id="1584380">
    <property type="gene designation" value="Tsc22d4"/>
</dbReference>
<dbReference type="eggNOG" id="KOG4797">
    <property type="taxonomic scope" value="Eukaryota"/>
</dbReference>
<dbReference type="GeneTree" id="ENSGT00940000161400"/>
<dbReference type="HOGENOM" id="CLU_052826_0_0_1"/>
<dbReference type="InParanoid" id="Q3B8N7"/>
<dbReference type="OMA" id="YEQEMDH"/>
<dbReference type="OrthoDB" id="8961796at2759"/>
<dbReference type="PhylomeDB" id="Q3B8N7"/>
<dbReference type="PRO" id="PR:Q3B8N7"/>
<dbReference type="Proteomes" id="UP000002494">
    <property type="component" value="Chromosome 12"/>
</dbReference>
<dbReference type="Proteomes" id="UP000234681">
    <property type="component" value="Chromosome 12"/>
</dbReference>
<dbReference type="Bgee" id="ENSRNOG00000024616">
    <property type="expression patterns" value="Expressed in heart and 19 other cell types or tissues"/>
</dbReference>
<dbReference type="ExpressionAtlas" id="Q3B8N7">
    <property type="expression patterns" value="baseline and differential"/>
</dbReference>
<dbReference type="GO" id="GO:0005737">
    <property type="term" value="C:cytoplasm"/>
    <property type="evidence" value="ECO:0000250"/>
    <property type="project" value="UniProtKB"/>
</dbReference>
<dbReference type="GO" id="GO:0030425">
    <property type="term" value="C:dendrite"/>
    <property type="evidence" value="ECO:0000250"/>
    <property type="project" value="UniProtKB"/>
</dbReference>
<dbReference type="GO" id="GO:0005634">
    <property type="term" value="C:nucleus"/>
    <property type="evidence" value="ECO:0000250"/>
    <property type="project" value="UniProtKB"/>
</dbReference>
<dbReference type="GO" id="GO:0045202">
    <property type="term" value="C:synapse"/>
    <property type="evidence" value="ECO:0000250"/>
    <property type="project" value="UniProtKB"/>
</dbReference>
<dbReference type="GO" id="GO:0042593">
    <property type="term" value="P:glucose homeostasis"/>
    <property type="evidence" value="ECO:0000250"/>
    <property type="project" value="UniProtKB"/>
</dbReference>
<dbReference type="GO" id="GO:0000122">
    <property type="term" value="P:negative regulation of transcription by RNA polymerase II"/>
    <property type="evidence" value="ECO:0000250"/>
    <property type="project" value="UniProtKB"/>
</dbReference>
<dbReference type="GO" id="GO:0070050">
    <property type="term" value="P:neuron cellular homeostasis"/>
    <property type="evidence" value="ECO:0000250"/>
    <property type="project" value="UniProtKB"/>
</dbReference>
<dbReference type="GO" id="GO:1990138">
    <property type="term" value="P:neuron projection extension"/>
    <property type="evidence" value="ECO:0000250"/>
    <property type="project" value="UniProtKB"/>
</dbReference>
<dbReference type="GO" id="GO:0006970">
    <property type="term" value="P:response to osmotic stress"/>
    <property type="evidence" value="ECO:0000266"/>
    <property type="project" value="RGD"/>
</dbReference>
<dbReference type="CDD" id="cd21941">
    <property type="entry name" value="ZIP_TSC22D4"/>
    <property type="match status" value="1"/>
</dbReference>
<dbReference type="FunFam" id="1.20.5.490:FF:000002">
    <property type="entry name" value="TSC22 domain family, member 1"/>
    <property type="match status" value="1"/>
</dbReference>
<dbReference type="Gene3D" id="1.20.5.490">
    <property type="entry name" value="Single helix bin"/>
    <property type="match status" value="1"/>
</dbReference>
<dbReference type="InterPro" id="IPR000580">
    <property type="entry name" value="TSC22/Bun"/>
</dbReference>
<dbReference type="InterPro" id="IPR047862">
    <property type="entry name" value="TSC22/BUN_CS"/>
</dbReference>
<dbReference type="InterPro" id="IPR042553">
    <property type="entry name" value="TSC22D4"/>
</dbReference>
<dbReference type="PANTHER" id="PTHR47610">
    <property type="entry name" value="TSC22 DOMAIN FAMILY PROTEIN 4"/>
    <property type="match status" value="1"/>
</dbReference>
<dbReference type="PANTHER" id="PTHR47610:SF1">
    <property type="entry name" value="TSC22 DOMAIN FAMILY PROTEIN 4"/>
    <property type="match status" value="1"/>
</dbReference>
<dbReference type="Pfam" id="PF01166">
    <property type="entry name" value="TSC22"/>
    <property type="match status" value="1"/>
</dbReference>
<dbReference type="SUPFAM" id="SSF58026">
    <property type="entry name" value="Delta-sleep-inducing peptide immunoreactive peptide"/>
    <property type="match status" value="1"/>
</dbReference>
<dbReference type="PROSITE" id="PS01289">
    <property type="entry name" value="TSC22"/>
    <property type="match status" value="1"/>
</dbReference>
<reference key="1">
    <citation type="submission" date="2005-07" db="EMBL/GenBank/DDBJ databases">
        <authorList>
            <person name="Mural R.J."/>
            <person name="Adams M.D."/>
            <person name="Myers E.W."/>
            <person name="Smith H.O."/>
            <person name="Venter J.C."/>
        </authorList>
    </citation>
    <scope>NUCLEOTIDE SEQUENCE [LARGE SCALE GENOMIC DNA]</scope>
</reference>
<reference key="2">
    <citation type="journal article" date="2004" name="Genome Res.">
        <title>The status, quality, and expansion of the NIH full-length cDNA project: the Mammalian Gene Collection (MGC).</title>
        <authorList>
            <consortium name="The MGC Project Team"/>
        </authorList>
    </citation>
    <scope>NUCLEOTIDE SEQUENCE [LARGE SCALE MRNA]</scope>
    <source>
        <tissue>Thymus</tissue>
    </source>
</reference>
<reference key="3">
    <citation type="journal article" date="2012" name="Nat. Commun.">
        <title>Quantitative maps of protein phosphorylation sites across 14 different rat organs and tissues.</title>
        <authorList>
            <person name="Lundby A."/>
            <person name="Secher A."/>
            <person name="Lage K."/>
            <person name="Nordsborg N.B."/>
            <person name="Dmytriyev A."/>
            <person name="Lundby C."/>
            <person name="Olsen J.V."/>
        </authorList>
    </citation>
    <scope>PHOSPHORYLATION [LARGE SCALE ANALYSIS] AT SER-165; THR-223 AND SER-271</scope>
    <scope>IDENTIFICATION BY MASS SPECTROMETRY [LARGE SCALE ANALYSIS]</scope>
</reference>
<sequence length="387" mass="40041">MSGGKKKSSFQITSVTTDYEGPGSPGASDPPAPPAPAGPPPRLPNGEPNPDPGGRGTPRNGSPPPGAPASRFRVVKLPQGLGEPYRRGRWTCVDVYERDLEPPSFGRLLEGIRGASGGTGGRSLDSRLELASLGISTPIPQPGLSQGPTSWLRPPPTSPGPQARSFTGGLGQLAGPGKAKVETPPLSASPPQQRPPGPGTGDSAQTLPSLRVEVESGGLAAGTPPLSRRRDGAVRLRMELVAPEETGKVPPIDSRPNSPALYFDASLVHKSPDPFGAAAAQSLSLARSMLAISGHLDSDDDSGSGSLVGIDNKIEQAMDLVKSHLMFAVREEVEVLKEQIRDLAERNAALEQENGLLRALASPEQLAQLPSSGLPRLGPSAPNGPSI</sequence>
<name>T22D4_RAT</name>
<comment type="function">
    <text evidence="1">Binds DNA and acts as a transcriptional repressor (By similarity). Involved in the regulation of systematic glucose homeostasis and insulin sensitivity, via transcriptional repression of downstream insulin signaling targets such as OBP2A/LCN13 (By similarity). Acts as a negative regulator of lipogenic gene expression in hepatocytes and thereby mediates the control of very low-density lipoprotein release (By similarity). May play a role in neurite elongation and survival (By similarity).</text>
</comment>
<comment type="subunit">
    <text evidence="2">Forms a homodimer or heterodimer (By similarity). Forms a heterodimer with TSC22D1 isoforms 1 and 2 (By similarity). Interacts with NRBP1 (By similarity).</text>
</comment>
<comment type="subcellular location">
    <subcellularLocation>
        <location evidence="1">Nucleus</location>
    </subcellularLocation>
    <subcellularLocation>
        <location evidence="1">Cytoplasm</location>
    </subcellularLocation>
    <subcellularLocation>
        <location evidence="1">Cell projection</location>
        <location evidence="1">Dendrite</location>
    </subcellularLocation>
    <subcellularLocation>
        <location evidence="1">Synapse</location>
    </subcellularLocation>
    <text evidence="1">Localizes away from the nucleus to neurite processes and synaptic termini as cerebellar granular neurons differentiate (By similarity). Accumulates in the cytoplasm of differentiated Purkinje cells (By similarity). Localized to both the cytoplasm and nucleus in immature cerebellar granular neurons and atrophic Purkinje cells (By similarity).</text>
</comment>
<comment type="similarity">
    <text evidence="4">Belongs to the TSC-22/Dip/Bun family.</text>
</comment>
<protein>
    <recommendedName>
        <fullName evidence="5">TSC22 domain family protein 4</fullName>
    </recommendedName>
    <alternativeName>
        <fullName>TSC22-related-inducible leucine zipper protein 2</fullName>
    </alternativeName>
</protein>
<evidence type="ECO:0000250" key="1">
    <source>
        <dbReference type="UniProtKB" id="Q9EQN3"/>
    </source>
</evidence>
<evidence type="ECO:0000250" key="2">
    <source>
        <dbReference type="UniProtKB" id="Q9Y3Q8"/>
    </source>
</evidence>
<evidence type="ECO:0000256" key="3">
    <source>
        <dbReference type="SAM" id="MobiDB-lite"/>
    </source>
</evidence>
<evidence type="ECO:0000305" key="4"/>
<evidence type="ECO:0000312" key="5">
    <source>
        <dbReference type="RGD" id="1584380"/>
    </source>
</evidence>
<evidence type="ECO:0007744" key="6">
    <source>
    </source>
</evidence>
<organism>
    <name type="scientific">Rattus norvegicus</name>
    <name type="common">Rat</name>
    <dbReference type="NCBI Taxonomy" id="10116"/>
    <lineage>
        <taxon>Eukaryota</taxon>
        <taxon>Metazoa</taxon>
        <taxon>Chordata</taxon>
        <taxon>Craniata</taxon>
        <taxon>Vertebrata</taxon>
        <taxon>Euteleostomi</taxon>
        <taxon>Mammalia</taxon>
        <taxon>Eutheria</taxon>
        <taxon>Euarchontoglires</taxon>
        <taxon>Glires</taxon>
        <taxon>Rodentia</taxon>
        <taxon>Myomorpha</taxon>
        <taxon>Muroidea</taxon>
        <taxon>Muridae</taxon>
        <taxon>Murinae</taxon>
        <taxon>Rattus</taxon>
    </lineage>
</organism>
<accession>Q3B8N7</accession>
<keyword id="KW-0966">Cell projection</keyword>
<keyword id="KW-0963">Cytoplasm</keyword>
<keyword id="KW-0539">Nucleus</keyword>
<keyword id="KW-0597">Phosphoprotein</keyword>
<keyword id="KW-1185">Reference proteome</keyword>
<keyword id="KW-0678">Repressor</keyword>
<keyword id="KW-0770">Synapse</keyword>
<keyword id="KW-0804">Transcription</keyword>
<keyword id="KW-0805">Transcription regulation</keyword>